<evidence type="ECO:0000250" key="1">
    <source>
        <dbReference type="UniProtKB" id="O97366"/>
    </source>
</evidence>
<evidence type="ECO:0000250" key="2">
    <source>
        <dbReference type="UniProtKB" id="Q9GRW0"/>
    </source>
</evidence>
<evidence type="ECO:0000255" key="3"/>
<evidence type="ECO:0000255" key="4">
    <source>
        <dbReference type="PROSITE-ProRule" id="PRU00274"/>
    </source>
</evidence>
<evidence type="ECO:0000255" key="5">
    <source>
        <dbReference type="PROSITE-ProRule" id="PRU00498"/>
    </source>
</evidence>
<evidence type="ECO:0000269" key="6">
    <source>
    </source>
</evidence>
<evidence type="ECO:0000269" key="7">
    <source>
    </source>
</evidence>
<evidence type="ECO:0000269" key="8">
    <source>
    </source>
</evidence>
<evidence type="ECO:0000303" key="9">
    <source>
    </source>
</evidence>
<evidence type="ECO:0000303" key="10">
    <source ref="1"/>
</evidence>
<evidence type="ECO:0000305" key="11"/>
<evidence type="ECO:0000312" key="12">
    <source>
        <dbReference type="EMBL" id="CAD30839.1"/>
    </source>
</evidence>
<evidence type="ECO:0000312" key="13">
    <source>
        <dbReference type="EMBL" id="EAA44761.1"/>
    </source>
</evidence>
<evidence type="ECO:0000312" key="14">
    <source>
        <dbReference type="Proteomes" id="UP000007062"/>
    </source>
</evidence>
<dbReference type="EC" id="3.4.21.-" evidence="7 8"/>
<dbReference type="EMBL" id="AJ459779">
    <property type="protein sequence ID" value="CAD30839.1"/>
    <property type="molecule type" value="mRNA"/>
</dbReference>
<dbReference type="EMBL" id="AAAB01008879">
    <property type="protein sequence ID" value="EAA44761.1"/>
    <property type="molecule type" value="Genomic_DNA"/>
</dbReference>
<dbReference type="RefSeq" id="XP_312743.1">
    <property type="nucleotide sequence ID" value="XM_312743.4"/>
</dbReference>
<dbReference type="SMR" id="Q8MZM7"/>
<dbReference type="STRING" id="7165.Q8MZM7"/>
<dbReference type="MEROPS" id="S01.507"/>
<dbReference type="GlyCosmos" id="Q8MZM7">
    <property type="glycosylation" value="2 sites, No reported glycans"/>
</dbReference>
<dbReference type="PaxDb" id="7165-AGAP003057-PA"/>
<dbReference type="EnsemblMetazoa" id="AGAP003057-RA">
    <property type="protein sequence ID" value="AGAP003057-PA"/>
    <property type="gene ID" value="AGAP003057"/>
</dbReference>
<dbReference type="VEuPathDB" id="VectorBase:AGAMI1_013176"/>
<dbReference type="VEuPathDB" id="VectorBase:AGAP003057"/>
<dbReference type="eggNOG" id="KOG3627">
    <property type="taxonomic scope" value="Eukaryota"/>
</dbReference>
<dbReference type="HOGENOM" id="CLU_006842_0_3_1"/>
<dbReference type="InParanoid" id="Q8MZM7"/>
<dbReference type="OMA" id="NKYHDIA"/>
<dbReference type="PhylomeDB" id="Q8MZM7"/>
<dbReference type="Proteomes" id="UP000007062">
    <property type="component" value="Chromosome 2R"/>
</dbReference>
<dbReference type="GO" id="GO:0005615">
    <property type="term" value="C:extracellular space"/>
    <property type="evidence" value="ECO:0000318"/>
    <property type="project" value="GO_Central"/>
</dbReference>
<dbReference type="GO" id="GO:0004252">
    <property type="term" value="F:serine-type endopeptidase activity"/>
    <property type="evidence" value="ECO:0000314"/>
    <property type="project" value="UniProtKB"/>
</dbReference>
<dbReference type="GO" id="GO:0045087">
    <property type="term" value="P:innate immune response"/>
    <property type="evidence" value="ECO:0007669"/>
    <property type="project" value="UniProtKB-KW"/>
</dbReference>
<dbReference type="GO" id="GO:0035008">
    <property type="term" value="P:positive regulation of melanization defense response"/>
    <property type="evidence" value="ECO:0000314"/>
    <property type="project" value="UniProtKB"/>
</dbReference>
<dbReference type="GO" id="GO:0006508">
    <property type="term" value="P:proteolysis"/>
    <property type="evidence" value="ECO:0000314"/>
    <property type="project" value="UniProtKB"/>
</dbReference>
<dbReference type="CDD" id="cd00190">
    <property type="entry name" value="Tryp_SPc"/>
    <property type="match status" value="1"/>
</dbReference>
<dbReference type="FunFam" id="2.40.10.10:FF:000028">
    <property type="entry name" value="Serine protease easter"/>
    <property type="match status" value="1"/>
</dbReference>
<dbReference type="FunFam" id="2.40.10.10:FF:000084">
    <property type="entry name" value="Serine protease easter"/>
    <property type="match status" value="1"/>
</dbReference>
<dbReference type="Gene3D" id="3.30.1640.30">
    <property type="match status" value="1"/>
</dbReference>
<dbReference type="Gene3D" id="2.40.10.10">
    <property type="entry name" value="Trypsin-like serine proteases"/>
    <property type="match status" value="2"/>
</dbReference>
<dbReference type="InterPro" id="IPR022700">
    <property type="entry name" value="CLIP"/>
</dbReference>
<dbReference type="InterPro" id="IPR038565">
    <property type="entry name" value="CLIP_sf"/>
</dbReference>
<dbReference type="InterPro" id="IPR009003">
    <property type="entry name" value="Peptidase_S1_PA"/>
</dbReference>
<dbReference type="InterPro" id="IPR043504">
    <property type="entry name" value="Peptidase_S1_PA_chymotrypsin"/>
</dbReference>
<dbReference type="InterPro" id="IPR001314">
    <property type="entry name" value="Peptidase_S1A"/>
</dbReference>
<dbReference type="InterPro" id="IPR051487">
    <property type="entry name" value="Ser/Thr_Proteases_Immune/Dev"/>
</dbReference>
<dbReference type="InterPro" id="IPR001254">
    <property type="entry name" value="Trypsin_dom"/>
</dbReference>
<dbReference type="InterPro" id="IPR018114">
    <property type="entry name" value="TRYPSIN_HIS"/>
</dbReference>
<dbReference type="InterPro" id="IPR033116">
    <property type="entry name" value="TRYPSIN_SER"/>
</dbReference>
<dbReference type="PANTHER" id="PTHR24256">
    <property type="entry name" value="TRYPTASE-RELATED"/>
    <property type="match status" value="1"/>
</dbReference>
<dbReference type="Pfam" id="PF12032">
    <property type="entry name" value="CLIP"/>
    <property type="match status" value="1"/>
</dbReference>
<dbReference type="Pfam" id="PF00089">
    <property type="entry name" value="Trypsin"/>
    <property type="match status" value="1"/>
</dbReference>
<dbReference type="PRINTS" id="PR00722">
    <property type="entry name" value="CHYMOTRYPSIN"/>
</dbReference>
<dbReference type="SMART" id="SM00020">
    <property type="entry name" value="Tryp_SPc"/>
    <property type="match status" value="1"/>
</dbReference>
<dbReference type="SUPFAM" id="SSF50494">
    <property type="entry name" value="Trypsin-like serine proteases"/>
    <property type="match status" value="1"/>
</dbReference>
<dbReference type="PROSITE" id="PS50240">
    <property type="entry name" value="TRYPSIN_DOM"/>
    <property type="match status" value="1"/>
</dbReference>
<dbReference type="PROSITE" id="PS00134">
    <property type="entry name" value="TRYPSIN_HIS"/>
    <property type="match status" value="1"/>
</dbReference>
<dbReference type="PROSITE" id="PS00135">
    <property type="entry name" value="TRYPSIN_SER"/>
    <property type="match status" value="1"/>
</dbReference>
<name>CLB8_ANOGA</name>
<sequence>MSSAVLLLLVCGCALAVLSPVAYGAPMDTDDRPVWDSIRLCDIPNEPNPGQCMLPAECVAYGKINDVSSLSSIERFSFIKQIQCNGSDTVPYVCCPRDSDAYREPYVNETMVPKNRVASRIAFDADSCGIQSYVAKIRGGQLAEIDEFPWMAMLLYERDNNALTQGCGGALISRTYVITAAHCVTGKNFQQTKGRLKFVRLREYNIHTNPDCVYENDLKDCSDDMIDLVPQAVIPHPEYDSESSNQQHDIALIRIEQTPPFTDFLRSICLPEQNFESSATPGKKLSVSGWGRTDIFKDNLGPDVLSPIKLKLSLPYVEREKCSKTFRPWSFALGPGQMCAGGERAKDTCAGDSGSPLMSYDMKRAIWYITGIVSLGVRGCGVEGLPGVYTNVHHYLPWIKMYTGA</sequence>
<proteinExistence type="evidence at protein level"/>
<comment type="function">
    <text evidence="6 7">Serine protease that functions in the melanization-mediated immune response (PubMed:16935219, PubMed:26926112). Preferentially, cleaves substrates with an arginine at the P1 site (PubMed:26926112). May be involved in the activation of the prophenoloxidase cascade upstream of CLIPB9; does not cleave prophenoloxidase (PubMed:26926112).</text>
</comment>
<comment type="subcellular location">
    <subcellularLocation>
        <location evidence="11">Secreted</location>
    </subcellularLocation>
</comment>
<comment type="domain">
    <text evidence="1">The clip domain consists of 35-55 residues which are 'knitted' together usually by 3 conserved disulfide bonds forming a clip-like compact structure.</text>
</comment>
<comment type="PTM">
    <text evidence="7 8">Proteolytic cleavage is necessary for activation (PubMed:26926112, PubMed:37703846). Cleaved and activated by CLIPB4 (PubMed:37703846).</text>
</comment>
<comment type="disruption phenotype">
    <text evidence="7">RNAi-mediated knockdown in female does not affect lifespan and basal melanization (PubMed:26926112). Simultaneous RNAi-mediated knockdown of SRPN2 and CLIPB8 in female, reduces the spontaneous melanization and the lifespan shortening occurring in SRPN2 RNAi-mediated knockdown (PubMed:26926112). RNAi-mediated knockdown severely reduces the melanization of injected Sephadex beads (PubMed:26926112).</text>
</comment>
<comment type="similarity">
    <text evidence="11">Belongs to the peptidase S1 family. CLIP subfamily.</text>
</comment>
<comment type="caution">
    <text evidence="7">Interacts with serine peptidase inhibitor SRPN2 in vitro; however, SRPN2 does not inhibit CLIPB8 activity suggesting that CLIPB8 may not be a physiological target of SRPN2 in vivo.</text>
</comment>
<accession>Q8MZM7</accession>
<accession>Q7PGY0</accession>
<keyword id="KW-1015">Disulfide bond</keyword>
<keyword id="KW-0325">Glycoprotein</keyword>
<keyword id="KW-0378">Hydrolase</keyword>
<keyword id="KW-0391">Immunity</keyword>
<keyword id="KW-0399">Innate immunity</keyword>
<keyword id="KW-0645">Protease</keyword>
<keyword id="KW-1185">Reference proteome</keyword>
<keyword id="KW-0964">Secreted</keyword>
<keyword id="KW-0720">Serine protease</keyword>
<keyword id="KW-0732">Signal</keyword>
<keyword id="KW-0865">Zymogen</keyword>
<protein>
    <recommendedName>
        <fullName evidence="11">CLIP domain-containing serine protease B8</fullName>
        <ecNumber evidence="7 8">3.4.21.-</ecNumber>
    </recommendedName>
    <component>
        <recommendedName>
            <fullName evidence="11">CLIP domain-containing serine protease B8 light chain</fullName>
        </recommendedName>
    </component>
    <component>
        <recommendedName>
            <fullName evidence="11">CLIP domain-containing serine protease B8 heavy chain</fullName>
        </recommendedName>
    </component>
</protein>
<reference evidence="12" key="1">
    <citation type="submission" date="2002-05" db="EMBL/GenBank/DDBJ databases">
        <title>PCR-Cloning of a serine protease AgSer6 in Anopheles gambiae.</title>
        <authorList>
            <person name="Volz J.B."/>
            <person name="Kafatos F.C."/>
            <person name="Muller H.M."/>
        </authorList>
    </citation>
    <scope>NUCLEOTIDE SEQUENCE [MRNA]</scope>
</reference>
<reference evidence="14" key="2">
    <citation type="journal article" date="2002" name="Science">
        <title>The genome sequence of the malaria mosquito Anopheles gambiae.</title>
        <authorList>
            <person name="Holt R.A."/>
            <person name="Subramanian G.M."/>
            <person name="Halpern A."/>
            <person name="Sutton G.G."/>
            <person name="Charlab R."/>
            <person name="Nusskern D.R."/>
            <person name="Wincker P."/>
            <person name="Clark A.G."/>
            <person name="Ribeiro J.M.C."/>
            <person name="Wides R."/>
            <person name="Salzberg S.L."/>
            <person name="Loftus B.J."/>
            <person name="Yandell M.D."/>
            <person name="Majoros W.H."/>
            <person name="Rusch D.B."/>
            <person name="Lai Z."/>
            <person name="Kraft C.L."/>
            <person name="Abril J.F."/>
            <person name="Anthouard V."/>
            <person name="Arensburger P."/>
            <person name="Atkinson P.W."/>
            <person name="Baden H."/>
            <person name="de Berardinis V."/>
            <person name="Baldwin D."/>
            <person name="Benes V."/>
            <person name="Biedler J."/>
            <person name="Blass C."/>
            <person name="Bolanos R."/>
            <person name="Boscus D."/>
            <person name="Barnstead M."/>
            <person name="Cai S."/>
            <person name="Center A."/>
            <person name="Chaturverdi K."/>
            <person name="Christophides G.K."/>
            <person name="Chrystal M.A.M."/>
            <person name="Clamp M."/>
            <person name="Cravchik A."/>
            <person name="Curwen V."/>
            <person name="Dana A."/>
            <person name="Delcher A."/>
            <person name="Dew I."/>
            <person name="Evans C.A."/>
            <person name="Flanigan M."/>
            <person name="Grundschober-Freimoser A."/>
            <person name="Friedli L."/>
            <person name="Gu Z."/>
            <person name="Guan P."/>
            <person name="Guigo R."/>
            <person name="Hillenmeyer M.E."/>
            <person name="Hladun S.L."/>
            <person name="Hogan J.R."/>
            <person name="Hong Y.S."/>
            <person name="Hoover J."/>
            <person name="Jaillon O."/>
            <person name="Ke Z."/>
            <person name="Kodira C.D."/>
            <person name="Kokoza E."/>
            <person name="Koutsos A."/>
            <person name="Letunic I."/>
            <person name="Levitsky A.A."/>
            <person name="Liang Y."/>
            <person name="Lin J.-J."/>
            <person name="Lobo N.F."/>
            <person name="Lopez J.R."/>
            <person name="Malek J.A."/>
            <person name="McIntosh T.C."/>
            <person name="Meister S."/>
            <person name="Miller J.R."/>
            <person name="Mobarry C."/>
            <person name="Mongin E."/>
            <person name="Murphy S.D."/>
            <person name="O'Brochta D.A."/>
            <person name="Pfannkoch C."/>
            <person name="Qi R."/>
            <person name="Regier M.A."/>
            <person name="Remington K."/>
            <person name="Shao H."/>
            <person name="Sharakhova M.V."/>
            <person name="Sitter C.D."/>
            <person name="Shetty J."/>
            <person name="Smith T.J."/>
            <person name="Strong R."/>
            <person name="Sun J."/>
            <person name="Thomasova D."/>
            <person name="Ton L.Q."/>
            <person name="Topalis P."/>
            <person name="Tu Z.J."/>
            <person name="Unger M.F."/>
            <person name="Walenz B."/>
            <person name="Wang A.H."/>
            <person name="Wang J."/>
            <person name="Wang M."/>
            <person name="Wang X."/>
            <person name="Woodford K.J."/>
            <person name="Wortman J.R."/>
            <person name="Wu M."/>
            <person name="Yao A."/>
            <person name="Zdobnov E.M."/>
            <person name="Zhang H."/>
            <person name="Zhao Q."/>
            <person name="Zhao S."/>
            <person name="Zhu S.C."/>
            <person name="Zhimulev I."/>
            <person name="Coluzzi M."/>
            <person name="della Torre A."/>
            <person name="Roth C.W."/>
            <person name="Louis C."/>
            <person name="Kalush F."/>
            <person name="Mural R.J."/>
            <person name="Myers E.W."/>
            <person name="Adams M.D."/>
            <person name="Smith H.O."/>
            <person name="Broder S."/>
            <person name="Gardner M.J."/>
            <person name="Fraser C.M."/>
            <person name="Birney E."/>
            <person name="Bork P."/>
            <person name="Brey P.T."/>
            <person name="Venter J.C."/>
            <person name="Weissenbach J."/>
            <person name="Kafatos F.C."/>
            <person name="Collins F.H."/>
            <person name="Hoffman S.L."/>
        </authorList>
    </citation>
    <scope>NUCLEOTIDE SEQUENCE [LARGE SCALE GENOMIC DNA]</scope>
    <source>
        <strain evidence="14">PEST</strain>
    </source>
</reference>
<reference evidence="11" key="3">
    <citation type="journal article" date="2006" name="Insect Biochem. Mol. Biol.">
        <title>Gene silencing of serine proteases affects melanization of Sephadex beads in Anopheles gambiae.</title>
        <authorList>
            <person name="Paskewitz S.M."/>
            <person name="Andreev O."/>
            <person name="Shi L."/>
        </authorList>
    </citation>
    <scope>FUNCTION</scope>
    <scope>DISRUPTION PHENOTYPE</scope>
    <source>
        <strain evidence="6">G3</strain>
    </source>
</reference>
<reference evidence="11" key="4">
    <citation type="journal article" date="2016" name="Insect Biochem. Mol. Biol.">
        <title>CLIPB8 is part of the prophenoloxidase activation system in Anopheles gambiae mosquitoes.</title>
        <authorList>
            <person name="Zhang X."/>
            <person name="An C."/>
            <person name="Sprigg K."/>
            <person name="Michel K."/>
        </authorList>
    </citation>
    <scope>FUNCTION</scope>
    <scope>CATALYTIC ACTIVITY</scope>
    <scope>PROTEOLYTIC CLEAVAGE</scope>
    <scope>DISRUPTION PHENOTYPE</scope>
    <source>
        <strain evidence="7">G3</strain>
    </source>
</reference>
<reference key="5">
    <citation type="journal article" date="2023" name="J. Innate Immun.">
        <title>CLIPB4 Is a Central Node in the Protease Network that Regulates Humoral Immunity in Anopheles gambiae Mosquitoes.</title>
        <authorList>
            <person name="Zhang X."/>
            <person name="Zhang S."/>
            <person name="Kuang J."/>
            <person name="Sellens K.A."/>
            <person name="Morejon B."/>
            <person name="Saab S.A."/>
            <person name="Li M."/>
            <person name="Metto E.C."/>
            <person name="An C."/>
            <person name="Culbertson C.T."/>
            <person name="Osta M.A."/>
            <person name="Scoglio C."/>
            <person name="Michel K."/>
        </authorList>
    </citation>
    <scope>CATALYTIC ACTIVITY</scope>
    <scope>PROTEOLYTIC CLEAVAGE BY CLIPB4</scope>
</reference>
<feature type="signal peptide" evidence="3">
    <location>
        <begin position="1"/>
        <end position="24"/>
    </location>
</feature>
<feature type="chain" id="PRO_5014589045" description="CLIP domain-containing serine protease B8" evidence="3">
    <location>
        <begin position="25"/>
        <end position="405"/>
    </location>
</feature>
<feature type="chain" id="PRO_0000455754" description="CLIP domain-containing serine protease B8 light chain" evidence="2">
    <location>
        <begin position="25"/>
        <end position="136"/>
    </location>
</feature>
<feature type="chain" id="PRO_0000455755" description="CLIP domain-containing serine protease B8 heavy chain" evidence="2">
    <location>
        <begin position="137"/>
        <end position="405"/>
    </location>
</feature>
<feature type="domain" description="Clip" evidence="2">
    <location>
        <begin position="41"/>
        <end position="95"/>
    </location>
</feature>
<feature type="domain" description="Peptidase S1" evidence="4">
    <location>
        <begin position="137"/>
        <end position="404"/>
    </location>
</feature>
<feature type="active site" description="Charge relay system" evidence="4">
    <location>
        <position position="182"/>
    </location>
</feature>
<feature type="active site" description="Charge relay system" evidence="4">
    <location>
        <position position="249"/>
    </location>
</feature>
<feature type="active site" description="Charge relay system" evidence="4">
    <location>
        <position position="353"/>
    </location>
</feature>
<feature type="site" description="Cleavage" evidence="2">
    <location>
        <begin position="136"/>
        <end position="137"/>
    </location>
</feature>
<feature type="glycosylation site" description="N-linked (GlcNAc...) asparagine" evidence="5">
    <location>
        <position position="85"/>
    </location>
</feature>
<feature type="glycosylation site" description="N-linked (GlcNAc...) asparagine" evidence="5">
    <location>
        <position position="108"/>
    </location>
</feature>
<feature type="disulfide bond" evidence="2">
    <location>
        <begin position="41"/>
        <end position="94"/>
    </location>
</feature>
<feature type="disulfide bond" evidence="2">
    <location>
        <begin position="52"/>
        <end position="84"/>
    </location>
</feature>
<feature type="disulfide bond" evidence="2">
    <location>
        <begin position="58"/>
        <end position="95"/>
    </location>
</feature>
<feature type="disulfide bond" evidence="4">
    <location>
        <begin position="167"/>
        <end position="183"/>
    </location>
</feature>
<feature type="disulfide bond" evidence="4">
    <location>
        <begin position="322"/>
        <end position="339"/>
    </location>
</feature>
<feature type="disulfide bond" evidence="4">
    <location>
        <begin position="349"/>
        <end position="380"/>
    </location>
</feature>
<gene>
    <name evidence="9" type="primary">CLIPB8</name>
    <name type="synonym">1273740</name>
    <name evidence="10" type="synonym">ser6</name>
    <name evidence="13" type="ORF">AgaP_AGAP003057</name>
</gene>
<organism evidence="14">
    <name type="scientific">Anopheles gambiae</name>
    <name type="common">African malaria mosquito</name>
    <dbReference type="NCBI Taxonomy" id="7165"/>
    <lineage>
        <taxon>Eukaryota</taxon>
        <taxon>Metazoa</taxon>
        <taxon>Ecdysozoa</taxon>
        <taxon>Arthropoda</taxon>
        <taxon>Hexapoda</taxon>
        <taxon>Insecta</taxon>
        <taxon>Pterygota</taxon>
        <taxon>Neoptera</taxon>
        <taxon>Endopterygota</taxon>
        <taxon>Diptera</taxon>
        <taxon>Nematocera</taxon>
        <taxon>Culicoidea</taxon>
        <taxon>Culicidae</taxon>
        <taxon>Anophelinae</taxon>
        <taxon>Anopheles</taxon>
    </lineage>
</organism>